<accession>Q1R697</accession>
<reference key="1">
    <citation type="journal article" date="2006" name="Proc. Natl. Acad. Sci. U.S.A.">
        <title>Identification of genes subject to positive selection in uropathogenic strains of Escherichia coli: a comparative genomics approach.</title>
        <authorList>
            <person name="Chen S.L."/>
            <person name="Hung C.-S."/>
            <person name="Xu J."/>
            <person name="Reigstad C.S."/>
            <person name="Magrini V."/>
            <person name="Sabo A."/>
            <person name="Blasiar D."/>
            <person name="Bieri T."/>
            <person name="Meyer R.R."/>
            <person name="Ozersky P."/>
            <person name="Armstrong J.R."/>
            <person name="Fulton R.S."/>
            <person name="Latreille J.P."/>
            <person name="Spieth J."/>
            <person name="Hooton T.M."/>
            <person name="Mardis E.R."/>
            <person name="Hultgren S.J."/>
            <person name="Gordon J.I."/>
        </authorList>
    </citation>
    <scope>NUCLEOTIDE SEQUENCE [LARGE SCALE GENOMIC DNA]</scope>
    <source>
        <strain>UTI89 / UPEC</strain>
    </source>
</reference>
<sequence>MSLFPVIVVFGLSFPPIFFELLLSLAIFWLVRRVLVPTGIYDFVWHPALFNTALYCCLFYLISRLFV</sequence>
<proteinExistence type="inferred from homology"/>
<evidence type="ECO:0000255" key="1">
    <source>
        <dbReference type="HAMAP-Rule" id="MF_01546"/>
    </source>
</evidence>
<evidence type="ECO:0000305" key="2"/>
<organism>
    <name type="scientific">Escherichia coli (strain UTI89 / UPEC)</name>
    <dbReference type="NCBI Taxonomy" id="364106"/>
    <lineage>
        <taxon>Bacteria</taxon>
        <taxon>Pseudomonadati</taxon>
        <taxon>Pseudomonadota</taxon>
        <taxon>Gammaproteobacteria</taxon>
        <taxon>Enterobacterales</taxon>
        <taxon>Enterobacteriaceae</taxon>
        <taxon>Escherichia</taxon>
    </lineage>
</organism>
<protein>
    <recommendedName>
        <fullName evidence="1">Protein AaeX</fullName>
    </recommendedName>
</protein>
<dbReference type="EMBL" id="CP000243">
    <property type="protein sequence ID" value="ABE09117.1"/>
    <property type="status" value="ALT_INIT"/>
    <property type="molecule type" value="Genomic_DNA"/>
</dbReference>
<dbReference type="RefSeq" id="WP_000051841.1">
    <property type="nucleotide sequence ID" value="NZ_CP064825.1"/>
</dbReference>
<dbReference type="GeneID" id="93778743"/>
<dbReference type="KEGG" id="eci:UTI89_C3673"/>
<dbReference type="HOGENOM" id="CLU_188292_0_0_6"/>
<dbReference type="Proteomes" id="UP000001952">
    <property type="component" value="Chromosome"/>
</dbReference>
<dbReference type="GO" id="GO:0005886">
    <property type="term" value="C:plasma membrane"/>
    <property type="evidence" value="ECO:0007669"/>
    <property type="project" value="UniProtKB-SubCell"/>
</dbReference>
<dbReference type="HAMAP" id="MF_01546">
    <property type="entry name" value="AaeX"/>
    <property type="match status" value="1"/>
</dbReference>
<dbReference type="InterPro" id="IPR012451">
    <property type="entry name" value="DUF1656"/>
</dbReference>
<dbReference type="NCBIfam" id="NF008615">
    <property type="entry name" value="PRK11594.1"/>
    <property type="match status" value="1"/>
</dbReference>
<dbReference type="Pfam" id="PF07869">
    <property type="entry name" value="DUF1656"/>
    <property type="match status" value="1"/>
</dbReference>
<keyword id="KW-1003">Cell membrane</keyword>
<keyword id="KW-0472">Membrane</keyword>
<keyword id="KW-0812">Transmembrane</keyword>
<keyword id="KW-1133">Transmembrane helix</keyword>
<gene>
    <name evidence="1" type="primary">aaeX</name>
    <name type="ordered locus">UTI89_C3673</name>
</gene>
<name>AAEX_ECOUT</name>
<feature type="chain" id="PRO_0000300573" description="Protein AaeX">
    <location>
        <begin position="1"/>
        <end position="67"/>
    </location>
</feature>
<feature type="transmembrane region" description="Helical" evidence="1">
    <location>
        <begin position="3"/>
        <end position="23"/>
    </location>
</feature>
<feature type="transmembrane region" description="Helical" evidence="1">
    <location>
        <begin position="43"/>
        <end position="63"/>
    </location>
</feature>
<comment type="subcellular location">
    <subcellularLocation>
        <location evidence="1">Cell membrane</location>
        <topology evidence="1">Multi-pass membrane protein</topology>
    </subcellularLocation>
</comment>
<comment type="induction">
    <text evidence="1">Positively coregulated with aaeA and aaeB by AaeR.</text>
</comment>
<comment type="similarity">
    <text evidence="1">Belongs to the AaeX family.</text>
</comment>
<comment type="sequence caution" evidence="2">
    <conflict type="erroneous initiation">
        <sequence resource="EMBL-CDS" id="ABE09117"/>
    </conflict>
</comment>